<protein>
    <recommendedName>
        <fullName evidence="14">Cystatin-D</fullName>
    </recommendedName>
    <alternativeName>
        <fullName evidence="10">Carminerin</fullName>
    </alternativeName>
    <alternativeName>
        <fullName evidence="9">Cystatin 10</fullName>
    </alternativeName>
    <alternativeName>
        <fullName evidence="14">Cystatin 5</fullName>
    </alternativeName>
</protein>
<sequence length="148" mass="16451">MASLLSPSMPVLAAVALTLTLAVIPEASTNAEAKQVVLGGVEPADPKDKEVQKVVKFAVRTYNDMDNDLYLSKPIRLMSASQQVVAGKNYYLKIELGRTTCTKTESNLVDCPFNEQPDQQKRVICNFQINVAPWLNKMSMTNFNCYNF</sequence>
<proteinExistence type="evidence at protein level"/>
<organism>
    <name type="scientific">Mus musculus</name>
    <name type="common">Mouse</name>
    <dbReference type="NCBI Taxonomy" id="10090"/>
    <lineage>
        <taxon>Eukaryota</taxon>
        <taxon>Metazoa</taxon>
        <taxon>Chordata</taxon>
        <taxon>Craniata</taxon>
        <taxon>Vertebrata</taxon>
        <taxon>Euteleostomi</taxon>
        <taxon>Mammalia</taxon>
        <taxon>Eutheria</taxon>
        <taxon>Euarchontoglires</taxon>
        <taxon>Glires</taxon>
        <taxon>Rodentia</taxon>
        <taxon>Myomorpha</taxon>
        <taxon>Muroidea</taxon>
        <taxon>Muridae</taxon>
        <taxon>Murinae</taxon>
        <taxon>Mus</taxon>
        <taxon>Mus</taxon>
    </lineage>
</organism>
<feature type="signal peptide" evidence="2">
    <location>
        <begin position="1"/>
        <end position="33"/>
    </location>
</feature>
<feature type="chain" id="PRO_5006993922" description="Cystatin-D">
    <location>
        <begin position="34"/>
        <end position="148"/>
    </location>
</feature>
<feature type="domain" description="Cystatin kininogen-type" evidence="3">
    <location>
        <begin position="36"/>
        <end position="148"/>
    </location>
</feature>
<feature type="disulfide bond" evidence="1">
    <location>
        <begin position="101"/>
        <end position="111"/>
    </location>
</feature>
<feature type="disulfide bond" evidence="3">
    <location>
        <begin position="125"/>
        <end position="145"/>
    </location>
</feature>
<feature type="splice variant" id="VSP_058422" description="In isoform 2.">
    <location>
        <begin position="84"/>
        <end position="121"/>
    </location>
</feature>
<accession>Q9JM84</accession>
<accession>A2ART7</accession>
<keyword id="KW-0025">Alternative splicing</keyword>
<keyword id="KW-0091">Biomineralization</keyword>
<keyword id="KW-0963">Cytoplasm</keyword>
<keyword id="KW-1015">Disulfide bond</keyword>
<keyword id="KW-1185">Reference proteome</keyword>
<keyword id="KW-0732">Signal</keyword>
<gene>
    <name evidence="14" type="primary">Cst5</name>
    <name evidence="9" type="synonym">Cst10</name>
    <name evidence="8" type="synonym">DD72</name>
</gene>
<dbReference type="EMBL" id="AB036743">
    <property type="protein sequence ID" value="BAA95411.1"/>
    <property type="molecule type" value="mRNA"/>
</dbReference>
<dbReference type="EMBL" id="AL845478">
    <property type="status" value="NOT_ANNOTATED_CDS"/>
    <property type="molecule type" value="Genomic_DNA"/>
</dbReference>
<dbReference type="EMBL" id="BC048364">
    <property type="protein sequence ID" value="AAH48364.1"/>
    <property type="molecule type" value="mRNA"/>
</dbReference>
<dbReference type="CCDS" id="CCDS16853.1">
    <molecule id="Q9JM84-1"/>
</dbReference>
<dbReference type="RefSeq" id="NP_067380.1">
    <molecule id="Q9JM84-1"/>
    <property type="nucleotide sequence ID" value="NM_021405.2"/>
</dbReference>
<dbReference type="SMR" id="Q9JM84"/>
<dbReference type="FunCoup" id="Q9JM84">
    <property type="interactions" value="15"/>
</dbReference>
<dbReference type="STRING" id="10090.ENSMUSP00000043520"/>
<dbReference type="PaxDb" id="10090-ENSMUSP00000043520"/>
<dbReference type="ProteomicsDB" id="283964">
    <molecule id="Q9JM84-1"/>
</dbReference>
<dbReference type="ProteomicsDB" id="283965">
    <molecule id="Q9JM84-2"/>
</dbReference>
<dbReference type="DNASU" id="58214"/>
<dbReference type="Ensembl" id="ENSMUST00000047008.9">
    <molecule id="Q9JM84-1"/>
    <property type="protein sequence ID" value="ENSMUSP00000043520.3"/>
    <property type="gene ID" value="ENSMUSG00000033156.10"/>
</dbReference>
<dbReference type="Ensembl" id="ENSMUST00000109938.8">
    <molecule id="Q9JM84-1"/>
    <property type="protein sequence ID" value="ENSMUSP00000105564.2"/>
    <property type="gene ID" value="ENSMUSG00000033156.10"/>
</dbReference>
<dbReference type="Ensembl" id="ENSMUST00000109939.3">
    <molecule id="Q9JM84-2"/>
    <property type="protein sequence ID" value="ENSMUSP00000105565.3"/>
    <property type="gene ID" value="ENSMUSG00000033156.10"/>
</dbReference>
<dbReference type="GeneID" id="58214"/>
<dbReference type="KEGG" id="mmu:58214"/>
<dbReference type="UCSC" id="uc008mtu.1">
    <molecule id="Q9JM84-1"/>
    <property type="organism name" value="mouse"/>
</dbReference>
<dbReference type="AGR" id="MGI:1930004"/>
<dbReference type="CTD" id="1473"/>
<dbReference type="MGI" id="MGI:1930004">
    <property type="gene designation" value="Cst5"/>
</dbReference>
<dbReference type="VEuPathDB" id="HostDB:ENSMUSG00000033156"/>
<dbReference type="eggNOG" id="ENOG502SC50">
    <property type="taxonomic scope" value="Eukaryota"/>
</dbReference>
<dbReference type="GeneTree" id="ENSGT00940000154755"/>
<dbReference type="HOGENOM" id="CLU_118168_0_1_1"/>
<dbReference type="InParanoid" id="Q9JM84"/>
<dbReference type="OMA" id="LTRNECH"/>
<dbReference type="OrthoDB" id="1908104at2759"/>
<dbReference type="PhylomeDB" id="Q9JM84"/>
<dbReference type="BioGRID-ORCS" id="58214">
    <property type="hits" value="2 hits in 78 CRISPR screens"/>
</dbReference>
<dbReference type="PRO" id="PR:Q9JM84"/>
<dbReference type="Proteomes" id="UP000000589">
    <property type="component" value="Chromosome 2"/>
</dbReference>
<dbReference type="RNAct" id="Q9JM84">
    <property type="molecule type" value="protein"/>
</dbReference>
<dbReference type="Bgee" id="ENSMUSG00000033156">
    <property type="expression patterns" value="Expressed in parotid gland and 14 other cell types or tissues"/>
</dbReference>
<dbReference type="GO" id="GO:0005829">
    <property type="term" value="C:cytosol"/>
    <property type="evidence" value="ECO:0000314"/>
    <property type="project" value="MGI"/>
</dbReference>
<dbReference type="GO" id="GO:0004869">
    <property type="term" value="F:cysteine-type endopeptidase inhibitor activity"/>
    <property type="evidence" value="ECO:0007669"/>
    <property type="project" value="InterPro"/>
</dbReference>
<dbReference type="GO" id="GO:0030282">
    <property type="term" value="P:bone mineralization"/>
    <property type="evidence" value="ECO:0000315"/>
    <property type="project" value="MGI"/>
</dbReference>
<dbReference type="GO" id="GO:0060349">
    <property type="term" value="P:bone morphogenesis"/>
    <property type="evidence" value="ECO:0000315"/>
    <property type="project" value="MGI"/>
</dbReference>
<dbReference type="GO" id="GO:0055074">
    <property type="term" value="P:calcium ion homeostasis"/>
    <property type="evidence" value="ECO:0000315"/>
    <property type="project" value="MGI"/>
</dbReference>
<dbReference type="GO" id="GO:0048469">
    <property type="term" value="P:cell maturation"/>
    <property type="evidence" value="ECO:0000314"/>
    <property type="project" value="MGI"/>
</dbReference>
<dbReference type="GO" id="GO:0019725">
    <property type="term" value="P:cellular homeostasis"/>
    <property type="evidence" value="ECO:0000315"/>
    <property type="project" value="MGI"/>
</dbReference>
<dbReference type="GO" id="GO:0002062">
    <property type="term" value="P:chondrocyte differentiation"/>
    <property type="evidence" value="ECO:0000314"/>
    <property type="project" value="MGI"/>
</dbReference>
<dbReference type="GO" id="GO:0001958">
    <property type="term" value="P:endochondral ossification"/>
    <property type="evidence" value="ECO:0000315"/>
    <property type="project" value="MGI"/>
</dbReference>
<dbReference type="GO" id="GO:0010467">
    <property type="term" value="P:gene expression"/>
    <property type="evidence" value="ECO:0000315"/>
    <property type="project" value="MGI"/>
</dbReference>
<dbReference type="GO" id="GO:0003430">
    <property type="term" value="P:growth plate cartilage chondrocyte growth"/>
    <property type="evidence" value="ECO:0000315"/>
    <property type="project" value="MGI"/>
</dbReference>
<dbReference type="CDD" id="cd00042">
    <property type="entry name" value="CY"/>
    <property type="match status" value="1"/>
</dbReference>
<dbReference type="FunFam" id="3.10.450.10:FF:000004">
    <property type="entry name" value="Cystatin C"/>
    <property type="match status" value="1"/>
</dbReference>
<dbReference type="Gene3D" id="3.10.450.10">
    <property type="match status" value="1"/>
</dbReference>
<dbReference type="InterPro" id="IPR000010">
    <property type="entry name" value="Cystatin_dom"/>
</dbReference>
<dbReference type="InterPro" id="IPR046350">
    <property type="entry name" value="Cystatin_sf"/>
</dbReference>
<dbReference type="InterPro" id="IPR018073">
    <property type="entry name" value="Prot_inh_cystat_CS"/>
</dbReference>
<dbReference type="InterPro" id="IPR001713">
    <property type="entry name" value="Prot_inh_stefin"/>
</dbReference>
<dbReference type="PANTHER" id="PTHR46186">
    <property type="entry name" value="CYSTATIN"/>
    <property type="match status" value="1"/>
</dbReference>
<dbReference type="PANTHER" id="PTHR46186:SF4">
    <property type="entry name" value="CYSTATIN 10"/>
    <property type="match status" value="1"/>
</dbReference>
<dbReference type="Pfam" id="PF00031">
    <property type="entry name" value="Cystatin"/>
    <property type="match status" value="1"/>
</dbReference>
<dbReference type="PRINTS" id="PR00295">
    <property type="entry name" value="STEFINA"/>
</dbReference>
<dbReference type="SMART" id="SM00043">
    <property type="entry name" value="CY"/>
    <property type="match status" value="1"/>
</dbReference>
<dbReference type="SUPFAM" id="SSF54403">
    <property type="entry name" value="Cystatin/monellin"/>
    <property type="match status" value="1"/>
</dbReference>
<dbReference type="PROSITE" id="PS00287">
    <property type="entry name" value="CYSTATIN"/>
    <property type="match status" value="1"/>
</dbReference>
<reference evidence="13" key="1">
    <citation type="journal article" date="2001" name="Cytogenet. Cell Genet.">
        <title>Isolation of novel mouse genes associated with ectopic ossification by differential display method using ttw, a mouse model for ectopic ossification.</title>
        <authorList>
            <person name="Koshizuka Y."/>
            <person name="Ikegawa S."/>
            <person name="Sano M."/>
            <person name="Nakamura K."/>
            <person name="Nakamura Y."/>
        </authorList>
    </citation>
    <scope>NUCLEOTIDE SEQUENCE [MRNA] (ISOFORM 1)</scope>
    <scope>TISSUE SPECIFICITY</scope>
    <scope>INDUCTION BY HIGH PHOSPHATE DIET</scope>
</reference>
<reference evidence="15" key="2">
    <citation type="journal article" date="2009" name="PLoS Biol.">
        <title>Lineage-specific biology revealed by a finished genome assembly of the mouse.</title>
        <authorList>
            <person name="Church D.M."/>
            <person name="Goodstadt L."/>
            <person name="Hillier L.W."/>
            <person name="Zody M.C."/>
            <person name="Goldstein S."/>
            <person name="She X."/>
            <person name="Bult C.J."/>
            <person name="Agarwala R."/>
            <person name="Cherry J.L."/>
            <person name="DiCuccio M."/>
            <person name="Hlavina W."/>
            <person name="Kapustin Y."/>
            <person name="Meric P."/>
            <person name="Maglott D."/>
            <person name="Birtle Z."/>
            <person name="Marques A.C."/>
            <person name="Graves T."/>
            <person name="Zhou S."/>
            <person name="Teague B."/>
            <person name="Potamousis K."/>
            <person name="Churas C."/>
            <person name="Place M."/>
            <person name="Herschleb J."/>
            <person name="Runnheim R."/>
            <person name="Forrest D."/>
            <person name="Amos-Landgraf J."/>
            <person name="Schwartz D.C."/>
            <person name="Cheng Z."/>
            <person name="Lindblad-Toh K."/>
            <person name="Eichler E.E."/>
            <person name="Ponting C.P."/>
        </authorList>
    </citation>
    <scope>NUCLEOTIDE SEQUENCE [LARGE SCALE GENOMIC DNA]</scope>
    <source>
        <strain evidence="15">C57BL/6J</strain>
    </source>
</reference>
<reference evidence="12" key="3">
    <citation type="journal article" date="2004" name="Genome Res.">
        <title>The status, quality, and expansion of the NIH full-length cDNA project: the Mammalian Gene Collection (MGC).</title>
        <authorList>
            <consortium name="The MGC Project Team"/>
        </authorList>
    </citation>
    <scope>NUCLEOTIDE SEQUENCE [LARGE SCALE MRNA] (ISOFORM 1)</scope>
    <source>
        <strain>FVB/N</strain>
        <tissue>Salivary gland</tissue>
    </source>
</reference>
<reference evidence="11" key="4">
    <citation type="journal article" date="2003" name="J. Biol. Chem.">
        <title>Cystatin 10, a novel chondrocyte-specific protein, may promote the last steps of the chondrocyte differentiation pathway.</title>
        <authorList>
            <person name="Koshizuka Y."/>
            <person name="Yamada T."/>
            <person name="Hoshi K."/>
            <person name="Ogasawara T."/>
            <person name="Chung U.I."/>
            <person name="Kawano H."/>
            <person name="Nakamura Y."/>
            <person name="Nakamura K."/>
            <person name="Ikegawa S."/>
            <person name="Kawaguchi H."/>
        </authorList>
    </citation>
    <scope>FUNCTION</scope>
    <scope>SUBCELLULAR LOCATION</scope>
    <scope>TISSUE SPECIFICITY</scope>
    <scope>DEVELOPMENTAL STAGE</scope>
    <scope>INDUCTION BY HIGH PHOSPHATE DIET</scope>
</reference>
<reference evidence="11" key="5">
    <citation type="journal article" date="2006" name="Nat. Med.">
        <title>Carminerin contributes to chondrocyte calcification during endochondral ossification.</title>
        <authorList>
            <person name="Yamada T."/>
            <person name="Kawano H."/>
            <person name="Koshizuka Y."/>
            <person name="Fukuda T."/>
            <person name="Yoshimura K."/>
            <person name="Kamekura S."/>
            <person name="Saito T."/>
            <person name="Ikeda T."/>
            <person name="Kawasaki Y."/>
            <person name="Azuma Y."/>
            <person name="Ikegawa S."/>
            <person name="Hoshi K."/>
            <person name="Chung U.I."/>
            <person name="Nakamura K."/>
            <person name="Kato S."/>
            <person name="Kawaguchi H."/>
        </authorList>
    </citation>
    <scope>FUNCTION</scope>
    <scope>DISRUPTION PHENOTYPE</scope>
</reference>
<comment type="function">
    <text evidence="6 7">May play a role in the last steps of the chondrocyte differentiation pathway as an inducer of maturation (PubMed:13679380). Induces chondrocyte calcification during endochondral ossification by playing a role in the transcriptional inhibition of ENPP1, a generator of pyrophosphate which inhibits calcification (PubMed:16680148). Possibly impairs the binding of a transcription factor to the ENPP1 promoter (PubMed:16680148). Unlike other cystatins, does not have thiol protease inhibitor activity (PubMed:16680148).</text>
</comment>
<comment type="subcellular location">
    <subcellularLocation>
        <location evidence="6">Cytoplasm</location>
        <location evidence="6">Cytosol</location>
    </subcellularLocation>
</comment>
<comment type="alternative products">
    <event type="alternative splicing"/>
    <isoform>
        <id>Q9JM84-1</id>
        <name>1</name>
        <sequence type="displayed"/>
    </isoform>
    <isoform>
        <id>Q9JM84-2</id>
        <name>2</name>
        <sequence type="described" ref="VSP_058422"/>
    </isoform>
</comment>
<comment type="tissue specificity">
    <text evidence="5 6">In cartilage, expressed mainly in mature chondrocytes including prehypertrophic and hypertrophic cells (at protein level) (PubMed:13679380). Expressed exclusively in cartilage (PubMed:11856874).</text>
</comment>
<comment type="developmental stage">
    <text evidence="6">In maturing chondrocytes, expression appears at day 3 and increases thereafter.</text>
</comment>
<comment type="induction">
    <text evidence="5 6">By high phosphate diet.</text>
</comment>
<comment type="disruption phenotype">
    <text evidence="7">No visible phenotype. Microscopic decrease in the calcification of hypertrophic chondrocytes at the growth plate.</text>
</comment>
<comment type="similarity">
    <text evidence="2 4">Belongs to the cystatin family.</text>
</comment>
<evidence type="ECO:0000250" key="1">
    <source>
        <dbReference type="UniProtKB" id="P28325"/>
    </source>
</evidence>
<evidence type="ECO:0000255" key="2"/>
<evidence type="ECO:0000255" key="3">
    <source>
        <dbReference type="PROSITE-ProRule" id="PRU00979"/>
    </source>
</evidence>
<evidence type="ECO:0000255" key="4">
    <source>
        <dbReference type="RuleBase" id="RU362130"/>
    </source>
</evidence>
<evidence type="ECO:0000269" key="5">
    <source>
    </source>
</evidence>
<evidence type="ECO:0000269" key="6">
    <source>
    </source>
</evidence>
<evidence type="ECO:0000269" key="7">
    <source>
    </source>
</evidence>
<evidence type="ECO:0000303" key="8">
    <source>
    </source>
</evidence>
<evidence type="ECO:0000303" key="9">
    <source>
    </source>
</evidence>
<evidence type="ECO:0000303" key="10">
    <source>
    </source>
</evidence>
<evidence type="ECO:0000305" key="11"/>
<evidence type="ECO:0000312" key="12">
    <source>
        <dbReference type="EMBL" id="AAH48364.1"/>
    </source>
</evidence>
<evidence type="ECO:0000312" key="13">
    <source>
        <dbReference type="EMBL" id="BAA95411.1"/>
    </source>
</evidence>
<evidence type="ECO:0000312" key="14">
    <source>
        <dbReference type="MGI" id="MGI:1930004"/>
    </source>
</evidence>
<evidence type="ECO:0000312" key="15">
    <source>
        <dbReference type="Proteomes" id="UP000000589"/>
    </source>
</evidence>
<name>CSTD_MOUSE</name>